<accession>Q646B5</accession>
<evidence type="ECO:0000250" key="1"/>
<evidence type="ECO:0000255" key="2"/>
<evidence type="ECO:0000305" key="3"/>
<sequence>MLRVVEGIFIFVVISESVFGVLGNGFIGLVNCIDCAKNKLSTIGFILTGLAISRIFLIWIIITDGFIQIFSPNIYASSNLIEYISYFWVIGNQSSMWFATSLSIFYFLKIANFSNYIFLWLKSRTNMVLPFMIVFLLISSLLNFAYIAKILNDYKMKNDTVWDLNMYKSEYFIKQILLNLGVIFFFTLSLITCVLLIISLWRHNRQMQSNVTGLRDSNTEAHVKAMKVLISFIILFILYFIGMAIEISYFTVRENKLLLMFGMTTTAIYPWGHSFILILGNSKLKQASLRVLQQLKCCEKRKNLRVT</sequence>
<feature type="chain" id="PRO_0000082240" description="Taste receptor type 2 member 10">
    <location>
        <begin position="1"/>
        <end position="307"/>
    </location>
</feature>
<feature type="topological domain" description="Extracellular" evidence="2">
    <location>
        <begin position="1"/>
        <end position="6"/>
    </location>
</feature>
<feature type="transmembrane region" description="Helical; Name=1" evidence="2">
    <location>
        <begin position="7"/>
        <end position="27"/>
    </location>
</feature>
<feature type="topological domain" description="Cytoplasmic" evidence="2">
    <location>
        <begin position="28"/>
        <end position="42"/>
    </location>
</feature>
<feature type="transmembrane region" description="Helical; Name=2" evidence="2">
    <location>
        <begin position="43"/>
        <end position="63"/>
    </location>
</feature>
<feature type="topological domain" description="Extracellular" evidence="2">
    <location>
        <begin position="64"/>
        <end position="100"/>
    </location>
</feature>
<feature type="transmembrane region" description="Helical; Name=3" evidence="2">
    <location>
        <begin position="101"/>
        <end position="121"/>
    </location>
</feature>
<feature type="topological domain" description="Cytoplasmic" evidence="2">
    <location>
        <begin position="122"/>
        <end position="126"/>
    </location>
</feature>
<feature type="transmembrane region" description="Helical; Name=4" evidence="2">
    <location>
        <begin position="127"/>
        <end position="147"/>
    </location>
</feature>
<feature type="topological domain" description="Extracellular" evidence="2">
    <location>
        <begin position="148"/>
        <end position="179"/>
    </location>
</feature>
<feature type="transmembrane region" description="Helical; Name=5" evidence="2">
    <location>
        <begin position="180"/>
        <end position="200"/>
    </location>
</feature>
<feature type="topological domain" description="Cytoplasmic" evidence="2">
    <location>
        <begin position="201"/>
        <end position="227"/>
    </location>
</feature>
<feature type="transmembrane region" description="Helical; Name=6" evidence="2">
    <location>
        <begin position="228"/>
        <end position="248"/>
    </location>
</feature>
<feature type="topological domain" description="Extracellular" evidence="2">
    <location>
        <begin position="249"/>
        <end position="257"/>
    </location>
</feature>
<feature type="transmembrane region" description="Helical; Name=7" evidence="2">
    <location>
        <begin position="258"/>
        <end position="278"/>
    </location>
</feature>
<feature type="topological domain" description="Cytoplasmic" evidence="2">
    <location>
        <begin position="279"/>
        <end position="307"/>
    </location>
</feature>
<feature type="glycosylation site" description="N-linked (GlcNAc...) asparagine" evidence="2">
    <location>
        <position position="158"/>
    </location>
</feature>
<proteinExistence type="inferred from homology"/>
<dbReference type="EMBL" id="AY724882">
    <property type="protein sequence ID" value="AAU21104.1"/>
    <property type="molecule type" value="Genomic_DNA"/>
</dbReference>
<dbReference type="RefSeq" id="NP_001009142.1">
    <property type="nucleotide sequence ID" value="NM_001009142.1"/>
</dbReference>
<dbReference type="SMR" id="Q646B5"/>
<dbReference type="FunCoup" id="Q646B5">
    <property type="interactions" value="228"/>
</dbReference>
<dbReference type="STRING" id="9598.ENSPTRP00000054731"/>
<dbReference type="GlyCosmos" id="Q646B5">
    <property type="glycosylation" value="1 site, No reported glycans"/>
</dbReference>
<dbReference type="PaxDb" id="9598-ENSPTRP00000054731"/>
<dbReference type="Ensembl" id="ENSPTRT00000008672.4">
    <property type="protein sequence ID" value="ENSPTRP00000054731.2"/>
    <property type="gene ID" value="ENSPTRG00000004685.6"/>
</dbReference>
<dbReference type="GeneID" id="493892"/>
<dbReference type="KEGG" id="ptr:493892"/>
<dbReference type="CTD" id="50839"/>
<dbReference type="VGNC" id="VGNC:13476">
    <property type="gene designation" value="TAS2R10"/>
</dbReference>
<dbReference type="eggNOG" id="ENOG502T3AX">
    <property type="taxonomic scope" value="Eukaryota"/>
</dbReference>
<dbReference type="GeneTree" id="ENSGT01100000263477"/>
<dbReference type="InParanoid" id="Q646B5"/>
<dbReference type="OMA" id="WLFTFPQ"/>
<dbReference type="OrthoDB" id="13276at9604"/>
<dbReference type="Proteomes" id="UP000002277">
    <property type="component" value="Chromosome 12"/>
</dbReference>
<dbReference type="Bgee" id="ENSPTRG00000004685">
    <property type="expression patterns" value="Expressed in colon and 9 other cell types or tissues"/>
</dbReference>
<dbReference type="GO" id="GO:0016020">
    <property type="term" value="C:membrane"/>
    <property type="evidence" value="ECO:0000318"/>
    <property type="project" value="GO_Central"/>
</dbReference>
<dbReference type="GO" id="GO:0005886">
    <property type="term" value="C:plasma membrane"/>
    <property type="evidence" value="ECO:0007669"/>
    <property type="project" value="UniProtKB-ARBA"/>
</dbReference>
<dbReference type="GO" id="GO:0033038">
    <property type="term" value="F:bitter taste receptor activity"/>
    <property type="evidence" value="ECO:0007669"/>
    <property type="project" value="Ensembl"/>
</dbReference>
<dbReference type="GO" id="GO:0004930">
    <property type="term" value="F:G protein-coupled receptor activity"/>
    <property type="evidence" value="ECO:0007669"/>
    <property type="project" value="UniProtKB-KW"/>
</dbReference>
<dbReference type="CDD" id="cd15021">
    <property type="entry name" value="7tm_TAS2R10"/>
    <property type="match status" value="1"/>
</dbReference>
<dbReference type="FunFam" id="1.20.1070.10:FF:000042">
    <property type="entry name" value="Taste receptor type 2 member 7"/>
    <property type="match status" value="1"/>
</dbReference>
<dbReference type="Gene3D" id="1.20.1070.10">
    <property type="entry name" value="Rhodopsin 7-helix transmembrane proteins"/>
    <property type="match status" value="1"/>
</dbReference>
<dbReference type="InterPro" id="IPR007960">
    <property type="entry name" value="TAS2R"/>
</dbReference>
<dbReference type="PANTHER" id="PTHR11394">
    <property type="entry name" value="TASTE RECEPTOR TYPE 2"/>
    <property type="match status" value="1"/>
</dbReference>
<dbReference type="PANTHER" id="PTHR11394:SF63">
    <property type="entry name" value="TASTE RECEPTOR TYPE 2 MEMBER 10"/>
    <property type="match status" value="1"/>
</dbReference>
<dbReference type="Pfam" id="PF05296">
    <property type="entry name" value="TAS2R"/>
    <property type="match status" value="1"/>
</dbReference>
<dbReference type="SUPFAM" id="SSF81321">
    <property type="entry name" value="Family A G protein-coupled receptor-like"/>
    <property type="match status" value="1"/>
</dbReference>
<gene>
    <name type="primary">TAS2R10</name>
</gene>
<keyword id="KW-0297">G-protein coupled receptor</keyword>
<keyword id="KW-0325">Glycoprotein</keyword>
<keyword id="KW-0472">Membrane</keyword>
<keyword id="KW-0675">Receptor</keyword>
<keyword id="KW-1185">Reference proteome</keyword>
<keyword id="KW-0716">Sensory transduction</keyword>
<keyword id="KW-0919">Taste</keyword>
<keyword id="KW-0807">Transducer</keyword>
<keyword id="KW-0812">Transmembrane</keyword>
<keyword id="KW-1133">Transmembrane helix</keyword>
<name>T2R10_PANTR</name>
<protein>
    <recommendedName>
        <fullName>Taste receptor type 2 member 10</fullName>
        <shortName>T2R10</shortName>
    </recommendedName>
</protein>
<comment type="function">
    <text evidence="1">Receptor that may play a role in the perception of bitterness and is gustducin-linked. May play a role in sensing the chemical composition of the gastrointestinal content. The activity of this receptor may stimulate alpha gustducin, mediate PLC-beta-2 activation and lead to the gating of TRPM5 (By similarity).</text>
</comment>
<comment type="subcellular location">
    <subcellularLocation>
        <location>Membrane</location>
        <topology>Multi-pass membrane protein</topology>
    </subcellularLocation>
</comment>
<comment type="miscellaneous">
    <text>Most taste cells may be activated by a limited number of bitter compounds; individual taste cells can discriminate among bitter stimuli.</text>
</comment>
<comment type="similarity">
    <text evidence="3">Belongs to the G-protein coupled receptor T2R family.</text>
</comment>
<reference key="1">
    <citation type="journal article" date="2005" name="Mol. Biol. Evol.">
        <title>Evolution of bitter taste receptors in humans and apes.</title>
        <authorList>
            <person name="Fischer A."/>
            <person name="Gilad Y."/>
            <person name="Man O."/>
            <person name="Paeaebo S."/>
        </authorList>
    </citation>
    <scope>NUCLEOTIDE SEQUENCE [GENOMIC DNA]</scope>
</reference>
<organism>
    <name type="scientific">Pan troglodytes</name>
    <name type="common">Chimpanzee</name>
    <dbReference type="NCBI Taxonomy" id="9598"/>
    <lineage>
        <taxon>Eukaryota</taxon>
        <taxon>Metazoa</taxon>
        <taxon>Chordata</taxon>
        <taxon>Craniata</taxon>
        <taxon>Vertebrata</taxon>
        <taxon>Euteleostomi</taxon>
        <taxon>Mammalia</taxon>
        <taxon>Eutheria</taxon>
        <taxon>Euarchontoglires</taxon>
        <taxon>Primates</taxon>
        <taxon>Haplorrhini</taxon>
        <taxon>Catarrhini</taxon>
        <taxon>Hominidae</taxon>
        <taxon>Pan</taxon>
    </lineage>
</organism>